<sequence length="167" mass="18894">MATAGMLLKLNSQMNREFYASNLYLHLSNWCSEQSLNGTATFLRAQAQSNVTQMMRMFNFMKSVGATPIVKAIDVPGEKLNSLEELFQKTMEEYEQRSSTLAQLADEAKELNDDSTVNFLRDLEKEQQHDGLLLQTILDEVRSAKLAGMCPVQTDQHVLNVVSHQLH</sequence>
<evidence type="ECO:0000255" key="1">
    <source>
        <dbReference type="PROSITE-ProRule" id="PRU00085"/>
    </source>
</evidence>
<evidence type="ECO:0000305" key="2"/>
<dbReference type="EMBL" id="AE005174">
    <property type="protein sequence ID" value="AAG56891.1"/>
    <property type="molecule type" value="Genomic_DNA"/>
</dbReference>
<dbReference type="EMBL" id="BA000007">
    <property type="protein sequence ID" value="BAB36033.1"/>
    <property type="molecule type" value="Genomic_DNA"/>
</dbReference>
<dbReference type="PIR" id="B90955">
    <property type="entry name" value="B90955"/>
</dbReference>
<dbReference type="PIR" id="G85803">
    <property type="entry name" value="G85803"/>
</dbReference>
<dbReference type="RefSeq" id="NP_310637.1">
    <property type="nucleotide sequence ID" value="NC_002695.1"/>
</dbReference>
<dbReference type="RefSeq" id="WP_000179469.1">
    <property type="nucleotide sequence ID" value="NZ_VOAI01000010.1"/>
</dbReference>
<dbReference type="SMR" id="P0A9A4"/>
<dbReference type="STRING" id="155864.Z2956"/>
<dbReference type="GeneID" id="913020"/>
<dbReference type="KEGG" id="ece:Z2956"/>
<dbReference type="KEGG" id="ecs:ECs_2610"/>
<dbReference type="PATRIC" id="fig|386585.9.peg.2736"/>
<dbReference type="eggNOG" id="COG1528">
    <property type="taxonomic scope" value="Bacteria"/>
</dbReference>
<dbReference type="HOGENOM" id="CLU_065681_1_3_6"/>
<dbReference type="OMA" id="SNVTHMM"/>
<dbReference type="Proteomes" id="UP000000558">
    <property type="component" value="Chromosome"/>
</dbReference>
<dbReference type="Proteomes" id="UP000002519">
    <property type="component" value="Chromosome"/>
</dbReference>
<dbReference type="GO" id="GO:0005737">
    <property type="term" value="C:cytoplasm"/>
    <property type="evidence" value="ECO:0007669"/>
    <property type="project" value="UniProtKB-SubCell"/>
</dbReference>
<dbReference type="GO" id="GO:0008199">
    <property type="term" value="F:ferric iron binding"/>
    <property type="evidence" value="ECO:0007669"/>
    <property type="project" value="InterPro"/>
</dbReference>
<dbReference type="CDD" id="cd01055">
    <property type="entry name" value="Nonheme_Ferritin"/>
    <property type="match status" value="1"/>
</dbReference>
<dbReference type="FunFam" id="1.20.1260.10:FF:000004">
    <property type="entry name" value="Ferritin"/>
    <property type="match status" value="1"/>
</dbReference>
<dbReference type="Gene3D" id="1.20.1260.10">
    <property type="match status" value="1"/>
</dbReference>
<dbReference type="InterPro" id="IPR012347">
    <property type="entry name" value="Ferritin-like"/>
</dbReference>
<dbReference type="InterPro" id="IPR009040">
    <property type="entry name" value="Ferritin-like_diiron"/>
</dbReference>
<dbReference type="InterPro" id="IPR009078">
    <property type="entry name" value="Ferritin-like_SF"/>
</dbReference>
<dbReference type="InterPro" id="IPR008331">
    <property type="entry name" value="Ferritin_DPS_dom"/>
</dbReference>
<dbReference type="InterPro" id="IPR041719">
    <property type="entry name" value="Ferritin_prok"/>
</dbReference>
<dbReference type="NCBIfam" id="NF011597">
    <property type="entry name" value="PRK15022.1"/>
    <property type="match status" value="1"/>
</dbReference>
<dbReference type="Pfam" id="PF00210">
    <property type="entry name" value="Ferritin"/>
    <property type="match status" value="1"/>
</dbReference>
<dbReference type="SUPFAM" id="SSF47240">
    <property type="entry name" value="Ferritin-like"/>
    <property type="match status" value="1"/>
</dbReference>
<dbReference type="PROSITE" id="PS50905">
    <property type="entry name" value="FERRITIN_LIKE"/>
    <property type="match status" value="1"/>
</dbReference>
<reference key="1">
    <citation type="journal article" date="2001" name="Nature">
        <title>Genome sequence of enterohaemorrhagic Escherichia coli O157:H7.</title>
        <authorList>
            <person name="Perna N.T."/>
            <person name="Plunkett G. III"/>
            <person name="Burland V."/>
            <person name="Mau B."/>
            <person name="Glasner J.D."/>
            <person name="Rose D.J."/>
            <person name="Mayhew G.F."/>
            <person name="Evans P.S."/>
            <person name="Gregor J."/>
            <person name="Kirkpatrick H.A."/>
            <person name="Posfai G."/>
            <person name="Hackett J."/>
            <person name="Klink S."/>
            <person name="Boutin A."/>
            <person name="Shao Y."/>
            <person name="Miller L."/>
            <person name="Grotbeck E.J."/>
            <person name="Davis N.W."/>
            <person name="Lim A."/>
            <person name="Dimalanta E.T."/>
            <person name="Potamousis K."/>
            <person name="Apodaca J."/>
            <person name="Anantharaman T.S."/>
            <person name="Lin J."/>
            <person name="Yen G."/>
            <person name="Schwartz D.C."/>
            <person name="Welch R.A."/>
            <person name="Blattner F.R."/>
        </authorList>
    </citation>
    <scope>NUCLEOTIDE SEQUENCE [LARGE SCALE GENOMIC DNA]</scope>
    <source>
        <strain>O157:H7 / EDL933 / ATCC 700927 / EHEC</strain>
    </source>
</reference>
<reference key="2">
    <citation type="journal article" date="2001" name="DNA Res.">
        <title>Complete genome sequence of enterohemorrhagic Escherichia coli O157:H7 and genomic comparison with a laboratory strain K-12.</title>
        <authorList>
            <person name="Hayashi T."/>
            <person name="Makino K."/>
            <person name="Ohnishi M."/>
            <person name="Kurokawa K."/>
            <person name="Ishii K."/>
            <person name="Yokoyama K."/>
            <person name="Han C.-G."/>
            <person name="Ohtsubo E."/>
            <person name="Nakayama K."/>
            <person name="Murata T."/>
            <person name="Tanaka M."/>
            <person name="Tobe T."/>
            <person name="Iida T."/>
            <person name="Takami H."/>
            <person name="Honda T."/>
            <person name="Sasakawa C."/>
            <person name="Ogasawara N."/>
            <person name="Yasunaga T."/>
            <person name="Kuhara S."/>
            <person name="Shiba T."/>
            <person name="Hattori M."/>
            <person name="Shinagawa H."/>
        </authorList>
    </citation>
    <scope>NUCLEOTIDE SEQUENCE [LARGE SCALE GENOMIC DNA]</scope>
    <source>
        <strain>O157:H7 / Sakai / RIMD 0509952 / EHEC</strain>
    </source>
</reference>
<accession>P0A9A4</accession>
<accession>P52091</accession>
<accession>P76306</accession>
<accession>P94744</accession>
<feature type="chain" id="PRO_0000201090" description="Bacterial non-heme ferritin-like protein">
    <location>
        <begin position="1"/>
        <end position="167"/>
    </location>
</feature>
<feature type="domain" description="Ferritin-like diiron" evidence="1">
    <location>
        <begin position="1"/>
        <end position="145"/>
    </location>
</feature>
<gene>
    <name type="primary">ftnB</name>
    <name type="ordered locus">Z2956</name>
    <name type="ordered locus">ECs2610</name>
</gene>
<name>FTNB_ECO57</name>
<comment type="subcellular location">
    <subcellularLocation>
        <location evidence="2">Cytoplasm</location>
    </subcellularLocation>
</comment>
<comment type="similarity">
    <text evidence="2">Belongs to the ferritin family. Prokaryotic subfamily.</text>
</comment>
<protein>
    <recommendedName>
        <fullName>Bacterial non-heme ferritin-like protein</fullName>
    </recommendedName>
</protein>
<keyword id="KW-0963">Cytoplasm</keyword>
<keyword id="KW-1185">Reference proteome</keyword>
<organism>
    <name type="scientific">Escherichia coli O157:H7</name>
    <dbReference type="NCBI Taxonomy" id="83334"/>
    <lineage>
        <taxon>Bacteria</taxon>
        <taxon>Pseudomonadati</taxon>
        <taxon>Pseudomonadota</taxon>
        <taxon>Gammaproteobacteria</taxon>
        <taxon>Enterobacterales</taxon>
        <taxon>Enterobacteriaceae</taxon>
        <taxon>Escherichia</taxon>
    </lineage>
</organism>
<proteinExistence type="inferred from homology"/>